<organismHost>
    <name type="scientific">Gallus gallus</name>
    <name type="common">Chicken</name>
    <dbReference type="NCBI Taxonomy" id="9031"/>
</organismHost>
<dbReference type="EC" id="2.7.10.2"/>
<dbReference type="EMBL" id="K01690">
    <property type="protein sequence ID" value="AAA42415.1"/>
    <property type="molecule type" value="Genomic_RNA"/>
</dbReference>
<dbReference type="PIR" id="A00650">
    <property type="entry name" value="TVFVFP"/>
</dbReference>
<dbReference type="SMR" id="P00541"/>
<dbReference type="BRENDA" id="2.7.10.2">
    <property type="organism ID" value="600"/>
</dbReference>
<dbReference type="GO" id="GO:0005524">
    <property type="term" value="F:ATP binding"/>
    <property type="evidence" value="ECO:0007669"/>
    <property type="project" value="UniProtKB-KW"/>
</dbReference>
<dbReference type="GO" id="GO:0004715">
    <property type="term" value="F:non-membrane spanning protein tyrosine kinase activity"/>
    <property type="evidence" value="ECO:0007669"/>
    <property type="project" value="UniProtKB-EC"/>
</dbReference>
<dbReference type="CDD" id="cd05084">
    <property type="entry name" value="PTKc_Fes"/>
    <property type="match status" value="1"/>
</dbReference>
<dbReference type="CDD" id="cd10361">
    <property type="entry name" value="SH2_Fps_family"/>
    <property type="match status" value="1"/>
</dbReference>
<dbReference type="FunFam" id="1.10.510.10:FF:000212">
    <property type="entry name" value="Tyrosine-protein kinase"/>
    <property type="match status" value="1"/>
</dbReference>
<dbReference type="FunFam" id="3.30.200.20:FF:000089">
    <property type="entry name" value="Tyrosine-protein kinase"/>
    <property type="match status" value="1"/>
</dbReference>
<dbReference type="FunFam" id="3.30.505.10:FF:000020">
    <property type="entry name" value="Tyrosine-protein kinase"/>
    <property type="match status" value="1"/>
</dbReference>
<dbReference type="Gene3D" id="1.20.1270.60">
    <property type="entry name" value="Arfaptin homology (AH) domain/BAR domain"/>
    <property type="match status" value="1"/>
</dbReference>
<dbReference type="Gene3D" id="3.30.200.20">
    <property type="entry name" value="Phosphorylase Kinase, domain 1"/>
    <property type="match status" value="1"/>
</dbReference>
<dbReference type="Gene3D" id="3.30.505.10">
    <property type="entry name" value="SH2 domain"/>
    <property type="match status" value="1"/>
</dbReference>
<dbReference type="Gene3D" id="1.10.510.10">
    <property type="entry name" value="Transferase(Phosphotransferase) domain 1"/>
    <property type="match status" value="1"/>
</dbReference>
<dbReference type="InterPro" id="IPR027267">
    <property type="entry name" value="AH/BAR_dom_sf"/>
</dbReference>
<dbReference type="InterPro" id="IPR031160">
    <property type="entry name" value="F_BAR"/>
</dbReference>
<dbReference type="InterPro" id="IPR001060">
    <property type="entry name" value="FCH_dom"/>
</dbReference>
<dbReference type="InterPro" id="IPR035849">
    <property type="entry name" value="Fes/Fps/Fer_SH2"/>
</dbReference>
<dbReference type="InterPro" id="IPR011009">
    <property type="entry name" value="Kinase-like_dom_sf"/>
</dbReference>
<dbReference type="InterPro" id="IPR050198">
    <property type="entry name" value="Non-receptor_tyrosine_kinases"/>
</dbReference>
<dbReference type="InterPro" id="IPR000719">
    <property type="entry name" value="Prot_kinase_dom"/>
</dbReference>
<dbReference type="InterPro" id="IPR017441">
    <property type="entry name" value="Protein_kinase_ATP_BS"/>
</dbReference>
<dbReference type="InterPro" id="IPR001245">
    <property type="entry name" value="Ser-Thr/Tyr_kinase_cat_dom"/>
</dbReference>
<dbReference type="InterPro" id="IPR000980">
    <property type="entry name" value="SH2"/>
</dbReference>
<dbReference type="InterPro" id="IPR036860">
    <property type="entry name" value="SH2_dom_sf"/>
</dbReference>
<dbReference type="InterPro" id="IPR008266">
    <property type="entry name" value="Tyr_kinase_AS"/>
</dbReference>
<dbReference type="InterPro" id="IPR020635">
    <property type="entry name" value="Tyr_kinase_cat_dom"/>
</dbReference>
<dbReference type="PANTHER" id="PTHR24418">
    <property type="entry name" value="TYROSINE-PROTEIN KINASE"/>
    <property type="match status" value="1"/>
</dbReference>
<dbReference type="Pfam" id="PF07714">
    <property type="entry name" value="PK_Tyr_Ser-Thr"/>
    <property type="match status" value="1"/>
</dbReference>
<dbReference type="Pfam" id="PF00017">
    <property type="entry name" value="SH2"/>
    <property type="match status" value="1"/>
</dbReference>
<dbReference type="PRINTS" id="PR00401">
    <property type="entry name" value="SH2DOMAIN"/>
</dbReference>
<dbReference type="PRINTS" id="PR00109">
    <property type="entry name" value="TYRKINASE"/>
</dbReference>
<dbReference type="SMART" id="SM00055">
    <property type="entry name" value="FCH"/>
    <property type="match status" value="1"/>
</dbReference>
<dbReference type="SMART" id="SM00252">
    <property type="entry name" value="SH2"/>
    <property type="match status" value="1"/>
</dbReference>
<dbReference type="SMART" id="SM00219">
    <property type="entry name" value="TyrKc"/>
    <property type="match status" value="1"/>
</dbReference>
<dbReference type="SUPFAM" id="SSF103657">
    <property type="entry name" value="BAR/IMD domain-like"/>
    <property type="match status" value="1"/>
</dbReference>
<dbReference type="SUPFAM" id="SSF56112">
    <property type="entry name" value="Protein kinase-like (PK-like)"/>
    <property type="match status" value="1"/>
</dbReference>
<dbReference type="SUPFAM" id="SSF55550">
    <property type="entry name" value="SH2 domain"/>
    <property type="match status" value="1"/>
</dbReference>
<dbReference type="PROSITE" id="PS51741">
    <property type="entry name" value="F_BAR"/>
    <property type="match status" value="1"/>
</dbReference>
<dbReference type="PROSITE" id="PS00107">
    <property type="entry name" value="PROTEIN_KINASE_ATP"/>
    <property type="match status" value="1"/>
</dbReference>
<dbReference type="PROSITE" id="PS50011">
    <property type="entry name" value="PROTEIN_KINASE_DOM"/>
    <property type="match status" value="1"/>
</dbReference>
<dbReference type="PROSITE" id="PS00109">
    <property type="entry name" value="PROTEIN_KINASE_TYR"/>
    <property type="match status" value="1"/>
</dbReference>
<dbReference type="PROSITE" id="PS50001">
    <property type="entry name" value="SH2"/>
    <property type="match status" value="1"/>
</dbReference>
<accession>P00541</accession>
<evidence type="ECO:0000250" key="1"/>
<evidence type="ECO:0000255" key="2">
    <source>
        <dbReference type="PROSITE-ProRule" id="PRU00159"/>
    </source>
</evidence>
<evidence type="ECO:0000255" key="3">
    <source>
        <dbReference type="PROSITE-ProRule" id="PRU00191"/>
    </source>
</evidence>
<evidence type="ECO:0000255" key="4">
    <source>
        <dbReference type="PROSITE-ProRule" id="PRU01077"/>
    </source>
</evidence>
<evidence type="ECO:0000255" key="5">
    <source>
        <dbReference type="PROSITE-ProRule" id="PRU10028"/>
    </source>
</evidence>
<evidence type="ECO:0000256" key="6">
    <source>
        <dbReference type="SAM" id="MobiDB-lite"/>
    </source>
</evidence>
<evidence type="ECO:0000305" key="7"/>
<sequence>ASGQLHRPQPQEHTSTSAAAGTWRHTQASESRHRLPHCSAAPSHQDHSAMGFGPELWCPKGHSELLRLQDSELRLLELMKKWMSERAKSDREYAGMLHHMFSQLGSEEPPPALPLQEDRQSVCSTDQERSGVTALETIKNHISGIFSPRFSLPPPVPLIPEVQKPLCQQAWYHGAIPRSEVQELLKCSGDFLVRESQGKQEYVLSVLWDGQPRHFIIQAADNLYRLEGDGFPTIPLLIDHLLQSQQPITRKSGIVLTRAVLKDKWVLNHEDVLLGERIGRGNFGEVFSGRLRADNTPVAVKSCRETLPPELKAKFLQEARILKQYNHPNIVRLIGVCTQKQPIYIVMELVQGGDFLSFLRSKGPHLKMKELIKMMENAAAGMEYLESKHCIHRDLAARNCLVTEKNTLKISDFGMSRQEEDGVYASTGGMKQIPVKWTAPEALNYGRYSSESDVWSFGILLWEAFSLGAVPYANLSNQQTREAIEQGVRLEPPEQCPEDVYRLMQRCWEYDPRRRPSFGAVHQDLIAIRKRHR</sequence>
<gene>
    <name type="primary">V-FPS</name>
</gene>
<proteinExistence type="inferred from homology"/>
<feature type="chain" id="PRO_0000088094" description="Tyrosine-protein kinase transforming protein Fps">
    <location>
        <begin position="1"/>
        <end position="533"/>
    </location>
</feature>
<feature type="domain" description="F-BAR; degenerate" evidence="4">
    <location>
        <begin position="50"/>
        <end position="124"/>
    </location>
</feature>
<feature type="domain" description="SH2" evidence="3">
    <location>
        <begin position="171"/>
        <end position="260"/>
    </location>
</feature>
<feature type="domain" description="Protein kinase" evidence="2">
    <location>
        <begin position="272"/>
        <end position="525"/>
    </location>
</feature>
<feature type="region of interest" description="Disordered" evidence="6">
    <location>
        <begin position="1"/>
        <end position="46"/>
    </location>
</feature>
<feature type="compositionally biased region" description="Polar residues" evidence="6">
    <location>
        <begin position="11"/>
        <end position="29"/>
    </location>
</feature>
<feature type="active site" description="Proton acceptor" evidence="2 5">
    <location>
        <position position="394"/>
    </location>
</feature>
<feature type="binding site" evidence="2">
    <location>
        <begin position="278"/>
        <end position="286"/>
    </location>
    <ligand>
        <name>ATP</name>
        <dbReference type="ChEBI" id="CHEBI:30616"/>
    </ligand>
</feature>
<feature type="binding site" evidence="2">
    <location>
        <position position="301"/>
    </location>
    <ligand>
        <name>ATP</name>
        <dbReference type="ChEBI" id="CHEBI:30616"/>
    </ligand>
</feature>
<feature type="modified residue" description="Phosphotyrosine; by autocatalysis" evidence="1">
    <location>
        <position position="424"/>
    </location>
</feature>
<keyword id="KW-0067">ATP-binding</keyword>
<keyword id="KW-0418">Kinase</keyword>
<keyword id="KW-0547">Nucleotide-binding</keyword>
<keyword id="KW-0553">Oncogene</keyword>
<keyword id="KW-0597">Phosphoprotein</keyword>
<keyword id="KW-0727">SH2 domain</keyword>
<keyword id="KW-0808">Transferase</keyword>
<keyword id="KW-0829">Tyrosine-protein kinase</keyword>
<name>FPS_AVISP</name>
<comment type="catalytic activity">
    <reaction evidence="5">
        <text>L-tyrosyl-[protein] + ATP = O-phospho-L-tyrosyl-[protein] + ADP + H(+)</text>
        <dbReference type="Rhea" id="RHEA:10596"/>
        <dbReference type="Rhea" id="RHEA-COMP:10136"/>
        <dbReference type="Rhea" id="RHEA-COMP:20101"/>
        <dbReference type="ChEBI" id="CHEBI:15378"/>
        <dbReference type="ChEBI" id="CHEBI:30616"/>
        <dbReference type="ChEBI" id="CHEBI:46858"/>
        <dbReference type="ChEBI" id="CHEBI:61978"/>
        <dbReference type="ChEBI" id="CHEBI:456216"/>
        <dbReference type="EC" id="2.7.10.2"/>
    </reaction>
</comment>
<comment type="domain">
    <text evidence="7">The F-BAR domain is truncated and contains only the FCH region (the coiled-coil region is missing).</text>
</comment>
<comment type="miscellaneous">
    <text>This protein is synthesized as a Gag-Fps polyprotein.</text>
</comment>
<comment type="miscellaneous">
    <text>Present in the avian viruses PRCII and Fujinami sarcoma virus (FSV). PRCII is less oncogenic than FSV and has a slightly different v-Fps protein.</text>
</comment>
<comment type="similarity">
    <text evidence="2">Belongs to the protein kinase superfamily. Tyr protein kinase family. Fes/fps subfamily.</text>
</comment>
<reference key="1">
    <citation type="journal article" date="1984" name="J. Virol.">
        <title>Nucleotide sequence of v-fps in the PRCII strain of avian sarcoma virus.</title>
        <authorList>
            <person name="Huang C.-C."/>
            <person name="Hammond C."/>
            <person name="Bishop J.M."/>
        </authorList>
    </citation>
    <scope>NUCLEOTIDE SEQUENCE [GENOMIC RNA]</scope>
</reference>
<organism>
    <name type="scientific">Avian sarcoma virus (strain PRCII)</name>
    <dbReference type="NCBI Taxonomy" id="11880"/>
    <lineage>
        <taxon>Viruses</taxon>
        <taxon>Riboviria</taxon>
        <taxon>Pararnavirae</taxon>
        <taxon>Artverviricota</taxon>
        <taxon>Revtraviricetes</taxon>
        <taxon>Ortervirales</taxon>
        <taxon>Retroviridae</taxon>
        <taxon>Orthoretrovirinae</taxon>
        <taxon>Alpharetrovirus</taxon>
        <taxon>Fujinami sarcoma virus</taxon>
    </lineage>
</organism>
<protein>
    <recommendedName>
        <fullName>Tyrosine-protein kinase transforming protein Fps</fullName>
        <ecNumber>2.7.10.2</ecNumber>
    </recommendedName>
</protein>